<gene>
    <name evidence="1" type="primary">dnaJ</name>
    <name type="ordered locus">Mfla_0750</name>
</gene>
<sequence length="373" mass="40709">MAKRDYYEVLGVNRDATDEEIKKAYRKLAMKYHPDRNPDNPKAEEHFKEAKEAYEVLSDDQKRAAYDQYGHAGVDPSAAAGAGAGGFGNFADAFGDIFGDIFGGGGGGRRSNVYRGADLRYNMEISLEEAARGTETKIRIPVMAECETCHGSGARPGTQPVTCSTCGGHGQVRMQQGFFSVQQTCPKCHGSGKMVKDPCPTCHGGGRVKQHKTLSVKIPAGVDEGDRIRLSGEGEAGVNGGPPGDLYVVVHLKKHPIFERDGANLHCEMPISFTTAALGGEIEIPTLDGHAKMKVPPETQTGAVFRLRGKGIKPLRSNEHGDLFCHVIVETPVKLTERQKELLRELEDINQQDSGKHSPREKSWMTKVKDFFQ</sequence>
<proteinExistence type="inferred from homology"/>
<feature type="chain" id="PRO_1000085227" description="Chaperone protein DnaJ">
    <location>
        <begin position="1"/>
        <end position="373"/>
    </location>
</feature>
<feature type="domain" description="J" evidence="1">
    <location>
        <begin position="5"/>
        <end position="70"/>
    </location>
</feature>
<feature type="repeat" description="CXXCXGXG motif">
    <location>
        <begin position="146"/>
        <end position="153"/>
    </location>
</feature>
<feature type="repeat" description="CXXCXGXG motif">
    <location>
        <begin position="163"/>
        <end position="170"/>
    </location>
</feature>
<feature type="repeat" description="CXXCXGXG motif">
    <location>
        <begin position="185"/>
        <end position="192"/>
    </location>
</feature>
<feature type="repeat" description="CXXCXGXG motif">
    <location>
        <begin position="199"/>
        <end position="206"/>
    </location>
</feature>
<feature type="zinc finger region" description="CR-type" evidence="1">
    <location>
        <begin position="133"/>
        <end position="211"/>
    </location>
</feature>
<feature type="region of interest" description="Disordered" evidence="2">
    <location>
        <begin position="346"/>
        <end position="373"/>
    </location>
</feature>
<feature type="compositionally biased region" description="Basic and acidic residues" evidence="2">
    <location>
        <begin position="354"/>
        <end position="373"/>
    </location>
</feature>
<feature type="binding site" evidence="1">
    <location>
        <position position="146"/>
    </location>
    <ligand>
        <name>Zn(2+)</name>
        <dbReference type="ChEBI" id="CHEBI:29105"/>
        <label>1</label>
    </ligand>
</feature>
<feature type="binding site" evidence="1">
    <location>
        <position position="149"/>
    </location>
    <ligand>
        <name>Zn(2+)</name>
        <dbReference type="ChEBI" id="CHEBI:29105"/>
        <label>1</label>
    </ligand>
</feature>
<feature type="binding site" evidence="1">
    <location>
        <position position="163"/>
    </location>
    <ligand>
        <name>Zn(2+)</name>
        <dbReference type="ChEBI" id="CHEBI:29105"/>
        <label>2</label>
    </ligand>
</feature>
<feature type="binding site" evidence="1">
    <location>
        <position position="166"/>
    </location>
    <ligand>
        <name>Zn(2+)</name>
        <dbReference type="ChEBI" id="CHEBI:29105"/>
        <label>2</label>
    </ligand>
</feature>
<feature type="binding site" evidence="1">
    <location>
        <position position="185"/>
    </location>
    <ligand>
        <name>Zn(2+)</name>
        <dbReference type="ChEBI" id="CHEBI:29105"/>
        <label>2</label>
    </ligand>
</feature>
<feature type="binding site" evidence="1">
    <location>
        <position position="188"/>
    </location>
    <ligand>
        <name>Zn(2+)</name>
        <dbReference type="ChEBI" id="CHEBI:29105"/>
        <label>2</label>
    </ligand>
</feature>
<feature type="binding site" evidence="1">
    <location>
        <position position="199"/>
    </location>
    <ligand>
        <name>Zn(2+)</name>
        <dbReference type="ChEBI" id="CHEBI:29105"/>
        <label>1</label>
    </ligand>
</feature>
<feature type="binding site" evidence="1">
    <location>
        <position position="202"/>
    </location>
    <ligand>
        <name>Zn(2+)</name>
        <dbReference type="ChEBI" id="CHEBI:29105"/>
        <label>1</label>
    </ligand>
</feature>
<protein>
    <recommendedName>
        <fullName evidence="1">Chaperone protein DnaJ</fullName>
    </recommendedName>
</protein>
<reference key="1">
    <citation type="submission" date="2006-03" db="EMBL/GenBank/DDBJ databases">
        <title>Complete sequence of Methylobacillus flagellatus KT.</title>
        <authorList>
            <consortium name="US DOE Joint Genome Institute"/>
            <person name="Copeland A."/>
            <person name="Lucas S."/>
            <person name="Lapidus A."/>
            <person name="Barry K."/>
            <person name="Detter J.C."/>
            <person name="Glavina del Rio T."/>
            <person name="Hammon N."/>
            <person name="Israni S."/>
            <person name="Dalin E."/>
            <person name="Tice H."/>
            <person name="Pitluck S."/>
            <person name="Brettin T."/>
            <person name="Bruce D."/>
            <person name="Han C."/>
            <person name="Tapia R."/>
            <person name="Saunders E."/>
            <person name="Gilna P."/>
            <person name="Schmutz J."/>
            <person name="Larimer F."/>
            <person name="Land M."/>
            <person name="Kyrpides N."/>
            <person name="Anderson I."/>
            <person name="Richardson P."/>
        </authorList>
    </citation>
    <scope>NUCLEOTIDE SEQUENCE [LARGE SCALE GENOMIC DNA]</scope>
    <source>
        <strain>ATCC 51484 / DSM 6875 / VKM B-1610 / KT</strain>
    </source>
</reference>
<dbReference type="EMBL" id="CP000284">
    <property type="protein sequence ID" value="ABE49018.1"/>
    <property type="molecule type" value="Genomic_DNA"/>
</dbReference>
<dbReference type="RefSeq" id="WP_011479115.1">
    <property type="nucleotide sequence ID" value="NC_007947.1"/>
</dbReference>
<dbReference type="SMR" id="Q1H3B9"/>
<dbReference type="STRING" id="265072.Mfla_0750"/>
<dbReference type="KEGG" id="mfa:Mfla_0750"/>
<dbReference type="eggNOG" id="COG0484">
    <property type="taxonomic scope" value="Bacteria"/>
</dbReference>
<dbReference type="HOGENOM" id="CLU_017633_0_7_4"/>
<dbReference type="OrthoDB" id="9779889at2"/>
<dbReference type="Proteomes" id="UP000002440">
    <property type="component" value="Chromosome"/>
</dbReference>
<dbReference type="GO" id="GO:0005737">
    <property type="term" value="C:cytoplasm"/>
    <property type="evidence" value="ECO:0007669"/>
    <property type="project" value="UniProtKB-SubCell"/>
</dbReference>
<dbReference type="GO" id="GO:0005524">
    <property type="term" value="F:ATP binding"/>
    <property type="evidence" value="ECO:0007669"/>
    <property type="project" value="InterPro"/>
</dbReference>
<dbReference type="GO" id="GO:0031072">
    <property type="term" value="F:heat shock protein binding"/>
    <property type="evidence" value="ECO:0007669"/>
    <property type="project" value="InterPro"/>
</dbReference>
<dbReference type="GO" id="GO:0051082">
    <property type="term" value="F:unfolded protein binding"/>
    <property type="evidence" value="ECO:0007669"/>
    <property type="project" value="UniProtKB-UniRule"/>
</dbReference>
<dbReference type="GO" id="GO:0008270">
    <property type="term" value="F:zinc ion binding"/>
    <property type="evidence" value="ECO:0007669"/>
    <property type="project" value="UniProtKB-UniRule"/>
</dbReference>
<dbReference type="GO" id="GO:0051085">
    <property type="term" value="P:chaperone cofactor-dependent protein refolding"/>
    <property type="evidence" value="ECO:0007669"/>
    <property type="project" value="TreeGrafter"/>
</dbReference>
<dbReference type="GO" id="GO:0006260">
    <property type="term" value="P:DNA replication"/>
    <property type="evidence" value="ECO:0007669"/>
    <property type="project" value="UniProtKB-KW"/>
</dbReference>
<dbReference type="GO" id="GO:0042026">
    <property type="term" value="P:protein refolding"/>
    <property type="evidence" value="ECO:0007669"/>
    <property type="project" value="TreeGrafter"/>
</dbReference>
<dbReference type="GO" id="GO:0009408">
    <property type="term" value="P:response to heat"/>
    <property type="evidence" value="ECO:0007669"/>
    <property type="project" value="InterPro"/>
</dbReference>
<dbReference type="CDD" id="cd06257">
    <property type="entry name" value="DnaJ"/>
    <property type="match status" value="1"/>
</dbReference>
<dbReference type="CDD" id="cd10747">
    <property type="entry name" value="DnaJ_C"/>
    <property type="match status" value="1"/>
</dbReference>
<dbReference type="CDD" id="cd10719">
    <property type="entry name" value="DnaJ_zf"/>
    <property type="match status" value="1"/>
</dbReference>
<dbReference type="FunFam" id="1.10.287.110:FF:000034">
    <property type="entry name" value="Chaperone protein DnaJ"/>
    <property type="match status" value="1"/>
</dbReference>
<dbReference type="FunFam" id="2.10.230.10:FF:000002">
    <property type="entry name" value="Molecular chaperone DnaJ"/>
    <property type="match status" value="1"/>
</dbReference>
<dbReference type="FunFam" id="2.60.260.20:FF:000004">
    <property type="entry name" value="Molecular chaperone DnaJ"/>
    <property type="match status" value="1"/>
</dbReference>
<dbReference type="FunFam" id="2.60.260.20:FF:000009">
    <property type="entry name" value="Putative Mitochondrial DnaJ chaperone"/>
    <property type="match status" value="1"/>
</dbReference>
<dbReference type="Gene3D" id="1.10.287.110">
    <property type="entry name" value="DnaJ domain"/>
    <property type="match status" value="1"/>
</dbReference>
<dbReference type="Gene3D" id="2.10.230.10">
    <property type="entry name" value="Heat shock protein DnaJ, cysteine-rich domain"/>
    <property type="match status" value="1"/>
</dbReference>
<dbReference type="Gene3D" id="2.60.260.20">
    <property type="entry name" value="Urease metallochaperone UreE, N-terminal domain"/>
    <property type="match status" value="2"/>
</dbReference>
<dbReference type="HAMAP" id="MF_01152">
    <property type="entry name" value="DnaJ"/>
    <property type="match status" value="1"/>
</dbReference>
<dbReference type="InterPro" id="IPR012724">
    <property type="entry name" value="DnaJ"/>
</dbReference>
<dbReference type="InterPro" id="IPR002939">
    <property type="entry name" value="DnaJ_C"/>
</dbReference>
<dbReference type="InterPro" id="IPR001623">
    <property type="entry name" value="DnaJ_domain"/>
</dbReference>
<dbReference type="InterPro" id="IPR018253">
    <property type="entry name" value="DnaJ_domain_CS"/>
</dbReference>
<dbReference type="InterPro" id="IPR008971">
    <property type="entry name" value="HSP40/DnaJ_pept-bd"/>
</dbReference>
<dbReference type="InterPro" id="IPR001305">
    <property type="entry name" value="HSP_DnaJ_Cys-rich_dom"/>
</dbReference>
<dbReference type="InterPro" id="IPR036410">
    <property type="entry name" value="HSP_DnaJ_Cys-rich_dom_sf"/>
</dbReference>
<dbReference type="InterPro" id="IPR036869">
    <property type="entry name" value="J_dom_sf"/>
</dbReference>
<dbReference type="NCBIfam" id="TIGR02349">
    <property type="entry name" value="DnaJ_bact"/>
    <property type="match status" value="1"/>
</dbReference>
<dbReference type="NCBIfam" id="NF008035">
    <property type="entry name" value="PRK10767.1"/>
    <property type="match status" value="1"/>
</dbReference>
<dbReference type="PANTHER" id="PTHR43096:SF48">
    <property type="entry name" value="CHAPERONE PROTEIN DNAJ"/>
    <property type="match status" value="1"/>
</dbReference>
<dbReference type="PANTHER" id="PTHR43096">
    <property type="entry name" value="DNAJ HOMOLOG 1, MITOCHONDRIAL-RELATED"/>
    <property type="match status" value="1"/>
</dbReference>
<dbReference type="Pfam" id="PF00226">
    <property type="entry name" value="DnaJ"/>
    <property type="match status" value="1"/>
</dbReference>
<dbReference type="Pfam" id="PF01556">
    <property type="entry name" value="DnaJ_C"/>
    <property type="match status" value="1"/>
</dbReference>
<dbReference type="Pfam" id="PF00684">
    <property type="entry name" value="DnaJ_CXXCXGXG"/>
    <property type="match status" value="1"/>
</dbReference>
<dbReference type="PRINTS" id="PR00625">
    <property type="entry name" value="JDOMAIN"/>
</dbReference>
<dbReference type="SMART" id="SM00271">
    <property type="entry name" value="DnaJ"/>
    <property type="match status" value="1"/>
</dbReference>
<dbReference type="SUPFAM" id="SSF46565">
    <property type="entry name" value="Chaperone J-domain"/>
    <property type="match status" value="1"/>
</dbReference>
<dbReference type="SUPFAM" id="SSF57938">
    <property type="entry name" value="DnaJ/Hsp40 cysteine-rich domain"/>
    <property type="match status" value="1"/>
</dbReference>
<dbReference type="SUPFAM" id="SSF49493">
    <property type="entry name" value="HSP40/DnaJ peptide-binding domain"/>
    <property type="match status" value="2"/>
</dbReference>
<dbReference type="PROSITE" id="PS00636">
    <property type="entry name" value="DNAJ_1"/>
    <property type="match status" value="1"/>
</dbReference>
<dbReference type="PROSITE" id="PS50076">
    <property type="entry name" value="DNAJ_2"/>
    <property type="match status" value="1"/>
</dbReference>
<dbReference type="PROSITE" id="PS51188">
    <property type="entry name" value="ZF_CR"/>
    <property type="match status" value="1"/>
</dbReference>
<accession>Q1H3B9</accession>
<evidence type="ECO:0000255" key="1">
    <source>
        <dbReference type="HAMAP-Rule" id="MF_01152"/>
    </source>
</evidence>
<evidence type="ECO:0000256" key="2">
    <source>
        <dbReference type="SAM" id="MobiDB-lite"/>
    </source>
</evidence>
<organism>
    <name type="scientific">Methylobacillus flagellatus (strain ATCC 51484 / DSM 6875 / VKM B-1610 / KT)</name>
    <dbReference type="NCBI Taxonomy" id="265072"/>
    <lineage>
        <taxon>Bacteria</taxon>
        <taxon>Pseudomonadati</taxon>
        <taxon>Pseudomonadota</taxon>
        <taxon>Betaproteobacteria</taxon>
        <taxon>Nitrosomonadales</taxon>
        <taxon>Methylophilaceae</taxon>
        <taxon>Methylobacillus</taxon>
    </lineage>
</organism>
<comment type="function">
    <text evidence="1">Participates actively in the response to hyperosmotic and heat shock by preventing the aggregation of stress-denatured proteins and by disaggregating proteins, also in an autonomous, DnaK-independent fashion. Unfolded proteins bind initially to DnaJ; upon interaction with the DnaJ-bound protein, DnaK hydrolyzes its bound ATP, resulting in the formation of a stable complex. GrpE releases ADP from DnaK; ATP binding to DnaK triggers the release of the substrate protein, thus completing the reaction cycle. Several rounds of ATP-dependent interactions between DnaJ, DnaK and GrpE are required for fully efficient folding. Also involved, together with DnaK and GrpE, in the DNA replication of plasmids through activation of initiation proteins.</text>
</comment>
<comment type="cofactor">
    <cofactor evidence="1">
        <name>Zn(2+)</name>
        <dbReference type="ChEBI" id="CHEBI:29105"/>
    </cofactor>
    <text evidence="1">Binds 2 Zn(2+) ions per monomer.</text>
</comment>
<comment type="subunit">
    <text evidence="1">Homodimer.</text>
</comment>
<comment type="subcellular location">
    <subcellularLocation>
        <location evidence="1">Cytoplasm</location>
    </subcellularLocation>
</comment>
<comment type="domain">
    <text evidence="1">The J domain is necessary and sufficient to stimulate DnaK ATPase activity. Zinc center 1 plays an important role in the autonomous, DnaK-independent chaperone activity of DnaJ. Zinc center 2 is essential for interaction with DnaK and for DnaJ activity.</text>
</comment>
<comment type="similarity">
    <text evidence="1">Belongs to the DnaJ family.</text>
</comment>
<keyword id="KW-0143">Chaperone</keyword>
<keyword id="KW-0963">Cytoplasm</keyword>
<keyword id="KW-0235">DNA replication</keyword>
<keyword id="KW-0479">Metal-binding</keyword>
<keyword id="KW-1185">Reference proteome</keyword>
<keyword id="KW-0677">Repeat</keyword>
<keyword id="KW-0346">Stress response</keyword>
<keyword id="KW-0862">Zinc</keyword>
<keyword id="KW-0863">Zinc-finger</keyword>
<name>DNAJ_METFK</name>